<protein>
    <recommendedName>
        <fullName evidence="1">Ribosome maturation factor RimM</fullName>
    </recommendedName>
</protein>
<keyword id="KW-0143">Chaperone</keyword>
<keyword id="KW-0963">Cytoplasm</keyword>
<keyword id="KW-0690">Ribosome biogenesis</keyword>
<keyword id="KW-0698">rRNA processing</keyword>
<evidence type="ECO:0000255" key="1">
    <source>
        <dbReference type="HAMAP-Rule" id="MF_00014"/>
    </source>
</evidence>
<sequence>MNYFNVGKIVNTQGLQGEMRVLSVTDFAEERFKKGAELALFDEKDQFVQTVTIASHRKQKNFDIIKFKDMYHINTIEKYKGYSLKVAEEDLNDLDDGEFYYHEIIGLEVYEGDSLVGTIKEILQPGANDVWVVKRKGKRDLLLPYIPPVVLNVDIPNKRVDVEILEGLDDED</sequence>
<organism>
    <name type="scientific">Streptococcus pneumoniae serotype 19F (strain G54)</name>
    <dbReference type="NCBI Taxonomy" id="512566"/>
    <lineage>
        <taxon>Bacteria</taxon>
        <taxon>Bacillati</taxon>
        <taxon>Bacillota</taxon>
        <taxon>Bacilli</taxon>
        <taxon>Lactobacillales</taxon>
        <taxon>Streptococcaceae</taxon>
        <taxon>Streptococcus</taxon>
    </lineage>
</organism>
<name>RIMM_STRP4</name>
<accession>B5E3G0</accession>
<comment type="function">
    <text evidence="1">An accessory protein needed during the final step in the assembly of 30S ribosomal subunit, possibly for assembly of the head region. Essential for efficient processing of 16S rRNA. May be needed both before and after RbfA during the maturation of 16S rRNA. It has affinity for free ribosomal 30S subunits but not for 70S ribosomes.</text>
</comment>
<comment type="subunit">
    <text evidence="1">Binds ribosomal protein uS19.</text>
</comment>
<comment type="subcellular location">
    <subcellularLocation>
        <location evidence="1">Cytoplasm</location>
    </subcellularLocation>
</comment>
<comment type="domain">
    <text evidence="1">The PRC barrel domain binds ribosomal protein uS19.</text>
</comment>
<comment type="similarity">
    <text evidence="1">Belongs to the RimM family.</text>
</comment>
<feature type="chain" id="PRO_1000089525" description="Ribosome maturation factor RimM">
    <location>
        <begin position="1"/>
        <end position="172"/>
    </location>
</feature>
<feature type="domain" description="PRC barrel" evidence="1">
    <location>
        <begin position="95"/>
        <end position="168"/>
    </location>
</feature>
<gene>
    <name evidence="1" type="primary">rimM</name>
    <name type="ordered locus">SPG_0708</name>
</gene>
<proteinExistence type="inferred from homology"/>
<reference key="1">
    <citation type="journal article" date="2001" name="Microb. Drug Resist.">
        <title>Annotated draft genomic sequence from a Streptococcus pneumoniae type 19F clinical isolate.</title>
        <authorList>
            <person name="Dopazo J."/>
            <person name="Mendoza A."/>
            <person name="Herrero J."/>
            <person name="Caldara F."/>
            <person name="Humbert Y."/>
            <person name="Friedli L."/>
            <person name="Guerrier M."/>
            <person name="Grand-Schenk E."/>
            <person name="Gandin C."/>
            <person name="de Francesco M."/>
            <person name="Polissi A."/>
            <person name="Buell G."/>
            <person name="Feger G."/>
            <person name="Garcia E."/>
            <person name="Peitsch M."/>
            <person name="Garcia-Bustos J.F."/>
        </authorList>
    </citation>
    <scope>NUCLEOTIDE SEQUENCE [LARGE SCALE GENOMIC DNA]</scope>
    <source>
        <strain>G54</strain>
    </source>
</reference>
<reference key="2">
    <citation type="submission" date="2008-03" db="EMBL/GenBank/DDBJ databases">
        <title>Pneumococcal beta glucoside metabolism investigated by whole genome comparison.</title>
        <authorList>
            <person name="Mulas L."/>
            <person name="Trappetti C."/>
            <person name="Hakenbeck R."/>
            <person name="Iannelli F."/>
            <person name="Pozzi G."/>
            <person name="Davidsen T.M."/>
            <person name="Tettelin H."/>
            <person name="Oggioni M."/>
        </authorList>
    </citation>
    <scope>NUCLEOTIDE SEQUENCE [LARGE SCALE GENOMIC DNA]</scope>
    <source>
        <strain>G54</strain>
    </source>
</reference>
<dbReference type="EMBL" id="CP001015">
    <property type="protein sequence ID" value="ACF55882.1"/>
    <property type="molecule type" value="Genomic_DNA"/>
</dbReference>
<dbReference type="SMR" id="B5E3G0"/>
<dbReference type="KEGG" id="spx:SPG_0708"/>
<dbReference type="HOGENOM" id="CLU_077636_3_1_9"/>
<dbReference type="GO" id="GO:0005737">
    <property type="term" value="C:cytoplasm"/>
    <property type="evidence" value="ECO:0007669"/>
    <property type="project" value="UniProtKB-SubCell"/>
</dbReference>
<dbReference type="GO" id="GO:0005840">
    <property type="term" value="C:ribosome"/>
    <property type="evidence" value="ECO:0007669"/>
    <property type="project" value="InterPro"/>
</dbReference>
<dbReference type="GO" id="GO:0043022">
    <property type="term" value="F:ribosome binding"/>
    <property type="evidence" value="ECO:0007669"/>
    <property type="project" value="InterPro"/>
</dbReference>
<dbReference type="GO" id="GO:0042274">
    <property type="term" value="P:ribosomal small subunit biogenesis"/>
    <property type="evidence" value="ECO:0007669"/>
    <property type="project" value="UniProtKB-UniRule"/>
</dbReference>
<dbReference type="GO" id="GO:0006364">
    <property type="term" value="P:rRNA processing"/>
    <property type="evidence" value="ECO:0007669"/>
    <property type="project" value="UniProtKB-UniRule"/>
</dbReference>
<dbReference type="Gene3D" id="2.30.30.240">
    <property type="entry name" value="PRC-barrel domain"/>
    <property type="match status" value="1"/>
</dbReference>
<dbReference type="Gene3D" id="2.40.30.60">
    <property type="entry name" value="RimM"/>
    <property type="match status" value="1"/>
</dbReference>
<dbReference type="HAMAP" id="MF_00014">
    <property type="entry name" value="Ribosome_mat_RimM"/>
    <property type="match status" value="1"/>
</dbReference>
<dbReference type="InterPro" id="IPR027275">
    <property type="entry name" value="PRC-brl_dom"/>
</dbReference>
<dbReference type="InterPro" id="IPR011033">
    <property type="entry name" value="PRC_barrel-like_sf"/>
</dbReference>
<dbReference type="InterPro" id="IPR011961">
    <property type="entry name" value="RimM"/>
</dbReference>
<dbReference type="InterPro" id="IPR002676">
    <property type="entry name" value="RimM_N"/>
</dbReference>
<dbReference type="InterPro" id="IPR036976">
    <property type="entry name" value="RimM_N_sf"/>
</dbReference>
<dbReference type="InterPro" id="IPR009000">
    <property type="entry name" value="Transl_B-barrel_sf"/>
</dbReference>
<dbReference type="NCBIfam" id="TIGR02273">
    <property type="entry name" value="16S_RimM"/>
    <property type="match status" value="1"/>
</dbReference>
<dbReference type="PANTHER" id="PTHR33692">
    <property type="entry name" value="RIBOSOME MATURATION FACTOR RIMM"/>
    <property type="match status" value="1"/>
</dbReference>
<dbReference type="PANTHER" id="PTHR33692:SF1">
    <property type="entry name" value="RIBOSOME MATURATION FACTOR RIMM"/>
    <property type="match status" value="1"/>
</dbReference>
<dbReference type="Pfam" id="PF05239">
    <property type="entry name" value="PRC"/>
    <property type="match status" value="1"/>
</dbReference>
<dbReference type="Pfam" id="PF01782">
    <property type="entry name" value="RimM"/>
    <property type="match status" value="1"/>
</dbReference>
<dbReference type="SUPFAM" id="SSF50346">
    <property type="entry name" value="PRC-barrel domain"/>
    <property type="match status" value="1"/>
</dbReference>
<dbReference type="SUPFAM" id="SSF50447">
    <property type="entry name" value="Translation proteins"/>
    <property type="match status" value="1"/>
</dbReference>